<reference key="1">
    <citation type="journal article" date="2009" name="PLoS Genet.">
        <title>Organised genome dynamics in the Escherichia coli species results in highly diverse adaptive paths.</title>
        <authorList>
            <person name="Touchon M."/>
            <person name="Hoede C."/>
            <person name="Tenaillon O."/>
            <person name="Barbe V."/>
            <person name="Baeriswyl S."/>
            <person name="Bidet P."/>
            <person name="Bingen E."/>
            <person name="Bonacorsi S."/>
            <person name="Bouchier C."/>
            <person name="Bouvet O."/>
            <person name="Calteau A."/>
            <person name="Chiapello H."/>
            <person name="Clermont O."/>
            <person name="Cruveiller S."/>
            <person name="Danchin A."/>
            <person name="Diard M."/>
            <person name="Dossat C."/>
            <person name="Karoui M.E."/>
            <person name="Frapy E."/>
            <person name="Garry L."/>
            <person name="Ghigo J.M."/>
            <person name="Gilles A.M."/>
            <person name="Johnson J."/>
            <person name="Le Bouguenec C."/>
            <person name="Lescat M."/>
            <person name="Mangenot S."/>
            <person name="Martinez-Jehanne V."/>
            <person name="Matic I."/>
            <person name="Nassif X."/>
            <person name="Oztas S."/>
            <person name="Petit M.A."/>
            <person name="Pichon C."/>
            <person name="Rouy Z."/>
            <person name="Ruf C.S."/>
            <person name="Schneider D."/>
            <person name="Tourret J."/>
            <person name="Vacherie B."/>
            <person name="Vallenet D."/>
            <person name="Medigue C."/>
            <person name="Rocha E.P.C."/>
            <person name="Denamur E."/>
        </authorList>
    </citation>
    <scope>NUCLEOTIDE SEQUENCE [LARGE SCALE GENOMIC DNA]</scope>
    <source>
        <strain>ED1a</strain>
    </source>
</reference>
<organism>
    <name type="scientific">Escherichia coli O81 (strain ED1a)</name>
    <dbReference type="NCBI Taxonomy" id="585397"/>
    <lineage>
        <taxon>Bacteria</taxon>
        <taxon>Pseudomonadati</taxon>
        <taxon>Pseudomonadota</taxon>
        <taxon>Gammaproteobacteria</taxon>
        <taxon>Enterobacterales</taxon>
        <taxon>Enterobacteriaceae</taxon>
        <taxon>Escherichia</taxon>
    </lineage>
</organism>
<name>HOA_ECO81</name>
<sequence length="337" mass="36484">MNGKKLYISDVTLRDGMHAIRHQYSLENVRQIAKALDDARVDSIEVAHGDGLQGSSFNYGFGAHSDLEWIEAAADVVKHAKIATLLLPGIGTIHDLKNAWQAGARVVRVATHCTEADVSAQHIQYARELGMDTVGFLMMSHMTTPENLAKQAKLMEGYGATCIYVVDSDGAMNMSDIRDRFRALNAVLKPETQTGMHAHHNLSLGVANSIAAVEEGCDRIDASLAGMGAGAGNAPLEVFIAAADKLGWQHGTDLYALMDAADDLVRPLQDRPVRVDRETLALGYAGVYSSFLRHCETAAARYGLSAVDILVELGKRRMVGGQEDMIVDVALDLRNNK</sequence>
<evidence type="ECO:0000255" key="1">
    <source>
        <dbReference type="HAMAP-Rule" id="MF_01656"/>
    </source>
</evidence>
<proteinExistence type="inferred from homology"/>
<protein>
    <recommendedName>
        <fullName evidence="1">4-hydroxy-2-oxovalerate aldolase</fullName>
        <shortName evidence="1">HOA</shortName>
        <ecNumber evidence="1">4.1.3.39</ecNumber>
    </recommendedName>
    <alternativeName>
        <fullName evidence="1">4-hydroxy-2-keto-pentanoic acid aldolase</fullName>
    </alternativeName>
    <alternativeName>
        <fullName evidence="1">4-hydroxy-2-oxopentanoate aldolase</fullName>
    </alternativeName>
</protein>
<keyword id="KW-0058">Aromatic hydrocarbons catabolism</keyword>
<keyword id="KW-0456">Lyase</keyword>
<keyword id="KW-0464">Manganese</keyword>
<keyword id="KW-0479">Metal-binding</keyword>
<accession>B7MPB9</accession>
<gene>
    <name evidence="1" type="primary">mhpE</name>
    <name type="ordered locus">ECED1_0380</name>
</gene>
<feature type="chain" id="PRO_0000387833" description="4-hydroxy-2-oxovalerate aldolase">
    <location>
        <begin position="1"/>
        <end position="337"/>
    </location>
</feature>
<feature type="domain" description="Pyruvate carboxyltransferase" evidence="1">
    <location>
        <begin position="6"/>
        <end position="258"/>
    </location>
</feature>
<feature type="active site" description="Proton acceptor" evidence="1">
    <location>
        <position position="18"/>
    </location>
</feature>
<feature type="binding site" evidence="1">
    <location>
        <begin position="14"/>
        <end position="15"/>
    </location>
    <ligand>
        <name>substrate</name>
    </ligand>
</feature>
<feature type="binding site" evidence="1">
    <location>
        <position position="15"/>
    </location>
    <ligand>
        <name>Mn(2+)</name>
        <dbReference type="ChEBI" id="CHEBI:29035"/>
    </ligand>
</feature>
<feature type="binding site" evidence="1">
    <location>
        <position position="168"/>
    </location>
    <ligand>
        <name>substrate</name>
    </ligand>
</feature>
<feature type="binding site" evidence="1">
    <location>
        <position position="197"/>
    </location>
    <ligand>
        <name>Mn(2+)</name>
        <dbReference type="ChEBI" id="CHEBI:29035"/>
    </ligand>
</feature>
<feature type="binding site" evidence="1">
    <location>
        <position position="197"/>
    </location>
    <ligand>
        <name>substrate</name>
    </ligand>
</feature>
<feature type="binding site" evidence="1">
    <location>
        <position position="199"/>
    </location>
    <ligand>
        <name>Mn(2+)</name>
        <dbReference type="ChEBI" id="CHEBI:29035"/>
    </ligand>
</feature>
<feature type="binding site" evidence="1">
    <location>
        <position position="288"/>
    </location>
    <ligand>
        <name>substrate</name>
    </ligand>
</feature>
<feature type="site" description="Transition state stabilizer" evidence="1">
    <location>
        <position position="14"/>
    </location>
</feature>
<dbReference type="EC" id="4.1.3.39" evidence="1"/>
<dbReference type="EMBL" id="CU928162">
    <property type="protein sequence ID" value="CAR06591.1"/>
    <property type="molecule type" value="Genomic_DNA"/>
</dbReference>
<dbReference type="RefSeq" id="WP_001013498.1">
    <property type="nucleotide sequence ID" value="NC_011745.1"/>
</dbReference>
<dbReference type="SMR" id="B7MPB9"/>
<dbReference type="KEGG" id="ecq:ECED1_0380"/>
<dbReference type="HOGENOM" id="CLU_049173_0_0_6"/>
<dbReference type="UniPathway" id="UPA00714"/>
<dbReference type="Proteomes" id="UP000000748">
    <property type="component" value="Chromosome"/>
</dbReference>
<dbReference type="GO" id="GO:0003852">
    <property type="term" value="F:2-isopropylmalate synthase activity"/>
    <property type="evidence" value="ECO:0007669"/>
    <property type="project" value="TreeGrafter"/>
</dbReference>
<dbReference type="GO" id="GO:0008701">
    <property type="term" value="F:4-hydroxy-2-oxovalerate aldolase activity"/>
    <property type="evidence" value="ECO:0007669"/>
    <property type="project" value="UniProtKB-UniRule"/>
</dbReference>
<dbReference type="GO" id="GO:0030145">
    <property type="term" value="F:manganese ion binding"/>
    <property type="evidence" value="ECO:0007669"/>
    <property type="project" value="UniProtKB-UniRule"/>
</dbReference>
<dbReference type="GO" id="GO:0019380">
    <property type="term" value="P:3-phenylpropionate catabolic process"/>
    <property type="evidence" value="ECO:0007669"/>
    <property type="project" value="UniProtKB-UniRule"/>
</dbReference>
<dbReference type="GO" id="GO:0009098">
    <property type="term" value="P:L-leucine biosynthetic process"/>
    <property type="evidence" value="ECO:0007669"/>
    <property type="project" value="TreeGrafter"/>
</dbReference>
<dbReference type="CDD" id="cd07943">
    <property type="entry name" value="DRE_TIM_HOA"/>
    <property type="match status" value="1"/>
</dbReference>
<dbReference type="FunFam" id="1.10.8.60:FF:000042">
    <property type="entry name" value="4-hydroxy-2-oxovalerate aldolase"/>
    <property type="match status" value="1"/>
</dbReference>
<dbReference type="FunFam" id="3.20.20.70:FF:000072">
    <property type="entry name" value="4-hydroxy-2-oxovalerate aldolase"/>
    <property type="match status" value="1"/>
</dbReference>
<dbReference type="Gene3D" id="1.10.8.60">
    <property type="match status" value="1"/>
</dbReference>
<dbReference type="Gene3D" id="3.20.20.70">
    <property type="entry name" value="Aldolase class I"/>
    <property type="match status" value="1"/>
</dbReference>
<dbReference type="HAMAP" id="MF_01656">
    <property type="entry name" value="HOA"/>
    <property type="match status" value="1"/>
</dbReference>
<dbReference type="InterPro" id="IPR050073">
    <property type="entry name" value="2-IPM_HCS-like"/>
</dbReference>
<dbReference type="InterPro" id="IPR017629">
    <property type="entry name" value="4OH_2_O-val_aldolase"/>
</dbReference>
<dbReference type="InterPro" id="IPR013785">
    <property type="entry name" value="Aldolase_TIM"/>
</dbReference>
<dbReference type="InterPro" id="IPR012425">
    <property type="entry name" value="DmpG_comm"/>
</dbReference>
<dbReference type="InterPro" id="IPR035685">
    <property type="entry name" value="DRE_TIM_HOA"/>
</dbReference>
<dbReference type="InterPro" id="IPR000891">
    <property type="entry name" value="PYR_CT"/>
</dbReference>
<dbReference type="NCBIfam" id="TIGR03217">
    <property type="entry name" value="4OH_2_O_val_ald"/>
    <property type="match status" value="1"/>
</dbReference>
<dbReference type="NCBIfam" id="NF006049">
    <property type="entry name" value="PRK08195.1"/>
    <property type="match status" value="1"/>
</dbReference>
<dbReference type="PANTHER" id="PTHR10277:SF9">
    <property type="entry name" value="2-ISOPROPYLMALATE SYNTHASE 1, CHLOROPLASTIC-RELATED"/>
    <property type="match status" value="1"/>
</dbReference>
<dbReference type="PANTHER" id="PTHR10277">
    <property type="entry name" value="HOMOCITRATE SYNTHASE-RELATED"/>
    <property type="match status" value="1"/>
</dbReference>
<dbReference type="Pfam" id="PF07836">
    <property type="entry name" value="DmpG_comm"/>
    <property type="match status" value="1"/>
</dbReference>
<dbReference type="Pfam" id="PF00682">
    <property type="entry name" value="HMGL-like"/>
    <property type="match status" value="1"/>
</dbReference>
<dbReference type="SUPFAM" id="SSF51569">
    <property type="entry name" value="Aldolase"/>
    <property type="match status" value="1"/>
</dbReference>
<dbReference type="SUPFAM" id="SSF89000">
    <property type="entry name" value="post-HMGL domain-like"/>
    <property type="match status" value="1"/>
</dbReference>
<dbReference type="PROSITE" id="PS50991">
    <property type="entry name" value="PYR_CT"/>
    <property type="match status" value="1"/>
</dbReference>
<comment type="function">
    <text evidence="1">Catalyzes the retro-aldol cleavage of 4-hydroxy-2-oxopentanoate to pyruvate and acetaldehyde. Is involved in the meta-cleavage pathway for the degradation of aromatic compounds.</text>
</comment>
<comment type="catalytic activity">
    <reaction evidence="1">
        <text>(S)-4-hydroxy-2-oxopentanoate = acetaldehyde + pyruvate</text>
        <dbReference type="Rhea" id="RHEA:22624"/>
        <dbReference type="ChEBI" id="CHEBI:15343"/>
        <dbReference type="ChEBI" id="CHEBI:15361"/>
        <dbReference type="ChEBI" id="CHEBI:73143"/>
        <dbReference type="EC" id="4.1.3.39"/>
    </reaction>
</comment>
<comment type="pathway">
    <text evidence="1">Aromatic compound metabolism; 3-phenylpropanoate degradation.</text>
</comment>
<comment type="subunit">
    <text evidence="1">Interacts with MhpF.</text>
</comment>
<comment type="similarity">
    <text evidence="1">Belongs to the 4-hydroxy-2-oxovalerate aldolase family.</text>
</comment>